<organism>
    <name type="scientific">Burkholderia thailandensis (strain ATCC 700388 / DSM 13276 / CCUG 48851 / CIP 106301 / E264)</name>
    <dbReference type="NCBI Taxonomy" id="271848"/>
    <lineage>
        <taxon>Bacteria</taxon>
        <taxon>Pseudomonadati</taxon>
        <taxon>Pseudomonadota</taxon>
        <taxon>Betaproteobacteria</taxon>
        <taxon>Burkholderiales</taxon>
        <taxon>Burkholderiaceae</taxon>
        <taxon>Burkholderia</taxon>
        <taxon>pseudomallei group</taxon>
    </lineage>
</organism>
<protein>
    <recommendedName>
        <fullName evidence="1">Type III pantothenate kinase</fullName>
        <ecNumber evidence="1">2.7.1.33</ecNumber>
    </recommendedName>
    <alternativeName>
        <fullName evidence="1">PanK-III</fullName>
    </alternativeName>
    <alternativeName>
        <fullName evidence="1">Pantothenic acid kinase</fullName>
    </alternativeName>
</protein>
<proteinExistence type="evidence at protein level"/>
<dbReference type="EC" id="2.7.1.33" evidence="1"/>
<dbReference type="EMBL" id="CP000086">
    <property type="protein sequence ID" value="ABC37407.1"/>
    <property type="molecule type" value="Genomic_DNA"/>
</dbReference>
<dbReference type="RefSeq" id="WP_009893234.1">
    <property type="nucleotide sequence ID" value="NZ_CP008785.1"/>
</dbReference>
<dbReference type="PDB" id="4O5F">
    <property type="method" value="X-ray"/>
    <property type="resolution" value="1.55 A"/>
    <property type="chains" value="A/B=1-259"/>
</dbReference>
<dbReference type="PDB" id="4O8K">
    <property type="method" value="X-ray"/>
    <property type="resolution" value="1.70 A"/>
    <property type="chains" value="A/B=1-259"/>
</dbReference>
<dbReference type="PDBsum" id="4O5F"/>
<dbReference type="PDBsum" id="4O8K"/>
<dbReference type="SMR" id="Q2T1M2"/>
<dbReference type="GeneID" id="45120133"/>
<dbReference type="KEGG" id="bte:BTH_I0369"/>
<dbReference type="HOGENOM" id="CLU_066627_0_0_4"/>
<dbReference type="UniPathway" id="UPA00241">
    <property type="reaction ID" value="UER00352"/>
</dbReference>
<dbReference type="EvolutionaryTrace" id="Q2T1M2"/>
<dbReference type="Proteomes" id="UP000001930">
    <property type="component" value="Chromosome I"/>
</dbReference>
<dbReference type="GO" id="GO:0005737">
    <property type="term" value="C:cytoplasm"/>
    <property type="evidence" value="ECO:0007669"/>
    <property type="project" value="UniProtKB-SubCell"/>
</dbReference>
<dbReference type="GO" id="GO:0005524">
    <property type="term" value="F:ATP binding"/>
    <property type="evidence" value="ECO:0007669"/>
    <property type="project" value="UniProtKB-UniRule"/>
</dbReference>
<dbReference type="GO" id="GO:0004594">
    <property type="term" value="F:pantothenate kinase activity"/>
    <property type="evidence" value="ECO:0007669"/>
    <property type="project" value="UniProtKB-UniRule"/>
</dbReference>
<dbReference type="GO" id="GO:0015937">
    <property type="term" value="P:coenzyme A biosynthetic process"/>
    <property type="evidence" value="ECO:0007669"/>
    <property type="project" value="UniProtKB-UniRule"/>
</dbReference>
<dbReference type="CDD" id="cd24015">
    <property type="entry name" value="ASKHA_NBD_PanK-III"/>
    <property type="match status" value="1"/>
</dbReference>
<dbReference type="Gene3D" id="3.30.420.40">
    <property type="match status" value="2"/>
</dbReference>
<dbReference type="HAMAP" id="MF_01274">
    <property type="entry name" value="Pantothen_kinase_3"/>
    <property type="match status" value="1"/>
</dbReference>
<dbReference type="InterPro" id="IPR043129">
    <property type="entry name" value="ATPase_NBD"/>
</dbReference>
<dbReference type="InterPro" id="IPR004619">
    <property type="entry name" value="Type_III_PanK"/>
</dbReference>
<dbReference type="NCBIfam" id="TIGR00671">
    <property type="entry name" value="baf"/>
    <property type="match status" value="1"/>
</dbReference>
<dbReference type="NCBIfam" id="NF009865">
    <property type="entry name" value="PRK13328.1-1"/>
    <property type="match status" value="1"/>
</dbReference>
<dbReference type="NCBIfam" id="NF009868">
    <property type="entry name" value="PRK13328.1-4"/>
    <property type="match status" value="1"/>
</dbReference>
<dbReference type="PANTHER" id="PTHR34265">
    <property type="entry name" value="TYPE III PANTOTHENATE KINASE"/>
    <property type="match status" value="1"/>
</dbReference>
<dbReference type="PANTHER" id="PTHR34265:SF1">
    <property type="entry name" value="TYPE III PANTOTHENATE KINASE"/>
    <property type="match status" value="1"/>
</dbReference>
<dbReference type="Pfam" id="PF03309">
    <property type="entry name" value="Pan_kinase"/>
    <property type="match status" value="1"/>
</dbReference>
<dbReference type="SUPFAM" id="SSF53067">
    <property type="entry name" value="Actin-like ATPase domain"/>
    <property type="match status" value="2"/>
</dbReference>
<reference key="1">
    <citation type="journal article" date="2005" name="BMC Genomics">
        <title>Bacterial genome adaptation to niches: divergence of the potential virulence genes in three Burkholderia species of different survival strategies.</title>
        <authorList>
            <person name="Kim H.S."/>
            <person name="Schell M.A."/>
            <person name="Yu Y."/>
            <person name="Ulrich R.L."/>
            <person name="Sarria S.H."/>
            <person name="Nierman W.C."/>
            <person name="DeShazer D."/>
        </authorList>
    </citation>
    <scope>NUCLEOTIDE SEQUENCE [LARGE SCALE GENOMIC DNA]</scope>
    <source>
        <strain>ATCC 700388 / DSM 13276 / CCUG 48851 / CIP 106301 / E264</strain>
    </source>
</reference>
<keyword id="KW-0002">3D-structure</keyword>
<keyword id="KW-0067">ATP-binding</keyword>
<keyword id="KW-0173">Coenzyme A biosynthesis</keyword>
<keyword id="KW-0963">Cytoplasm</keyword>
<keyword id="KW-0418">Kinase</keyword>
<keyword id="KW-0547">Nucleotide-binding</keyword>
<keyword id="KW-0630">Potassium</keyword>
<keyword id="KW-0808">Transferase</keyword>
<gene>
    <name evidence="1" type="primary">coaX</name>
    <name type="ordered locus">BTH_I0369</name>
</gene>
<sequence length="259" mass="27005">MSGVCLLIDAGNSRIKWALADTGRHFVTSGAFEHADDTPDWSTLPAPRGAWISNVAGDAAAARIDALIDAHWPALPRTVVRACAAQCGVTNGYAEPARLGSDRWAGLIGAHAAFPGEHLLIATFGTATTLEALRADGRFTGGLIAPGWALMMRSLGMHTAQLPTVSIDAATSLLDELAANDAHAPFAIDTPHALSAGCLQAQAGLIERAWRDLEKAWKAPVRLVLSGGAADAIVRALTVPHTRHDTLVLTGLALIAHSA</sequence>
<name>COAX_BURTA</name>
<feature type="chain" id="PRO_0000270869" description="Type III pantothenate kinase">
    <location>
        <begin position="1"/>
        <end position="259"/>
    </location>
</feature>
<feature type="active site" description="Proton acceptor" evidence="1">
    <location>
        <position position="102"/>
    </location>
</feature>
<feature type="binding site" evidence="1">
    <location>
        <begin position="9"/>
        <end position="16"/>
    </location>
    <ligand>
        <name>ATP</name>
        <dbReference type="ChEBI" id="CHEBI:30616"/>
    </ligand>
</feature>
<feature type="binding site" evidence="1">
    <location>
        <position position="93"/>
    </location>
    <ligand>
        <name>substrate</name>
    </ligand>
</feature>
<feature type="binding site" evidence="1">
    <location>
        <begin position="100"/>
        <end position="103"/>
    </location>
    <ligand>
        <name>substrate</name>
    </ligand>
</feature>
<feature type="binding site" evidence="1">
    <location>
        <position position="126"/>
    </location>
    <ligand>
        <name>ATP</name>
        <dbReference type="ChEBI" id="CHEBI:30616"/>
    </ligand>
</feature>
<feature type="binding site" evidence="1">
    <location>
        <position position="190"/>
    </location>
    <ligand>
        <name>substrate</name>
    </ligand>
</feature>
<feature type="strand" evidence="2">
    <location>
        <begin position="5"/>
        <end position="10"/>
    </location>
</feature>
<feature type="strand" evidence="2">
    <location>
        <begin position="15"/>
        <end position="24"/>
    </location>
</feature>
<feature type="strand" evidence="2">
    <location>
        <begin position="26"/>
        <end position="32"/>
    </location>
</feature>
<feature type="strand" evidence="2">
    <location>
        <begin position="34"/>
        <end position="36"/>
    </location>
</feature>
<feature type="strand" evidence="2">
    <location>
        <begin position="50"/>
        <end position="54"/>
    </location>
</feature>
<feature type="helix" evidence="2">
    <location>
        <begin position="58"/>
        <end position="69"/>
    </location>
</feature>
<feature type="strand" evidence="2">
    <location>
        <begin position="77"/>
        <end position="79"/>
    </location>
</feature>
<feature type="strand" evidence="2">
    <location>
        <begin position="84"/>
        <end position="86"/>
    </location>
</feature>
<feature type="strand" evidence="2">
    <location>
        <begin position="89"/>
        <end position="91"/>
    </location>
</feature>
<feature type="strand" evidence="2">
    <location>
        <begin position="93"/>
        <end position="95"/>
    </location>
</feature>
<feature type="helix" evidence="2">
    <location>
        <begin position="96"/>
        <end position="98"/>
    </location>
</feature>
<feature type="helix" evidence="2">
    <location>
        <begin position="101"/>
        <end position="113"/>
    </location>
</feature>
<feature type="strand" evidence="2">
    <location>
        <begin position="118"/>
        <end position="133"/>
    </location>
</feature>
<feature type="strand" evidence="2">
    <location>
        <begin position="137"/>
        <end position="146"/>
    </location>
</feature>
<feature type="helix" evidence="2">
    <location>
        <begin position="148"/>
        <end position="157"/>
    </location>
</feature>
<feature type="strand" evidence="2">
    <location>
        <begin position="159"/>
        <end position="162"/>
    </location>
</feature>
<feature type="helix" evidence="2">
    <location>
        <begin position="167"/>
        <end position="178"/>
    </location>
</feature>
<feature type="turn" evidence="3">
    <location>
        <begin position="180"/>
        <end position="182"/>
    </location>
</feature>
<feature type="strand" evidence="2">
    <location>
        <begin position="187"/>
        <end position="189"/>
    </location>
</feature>
<feature type="helix" evidence="2">
    <location>
        <begin position="190"/>
        <end position="217"/>
    </location>
</feature>
<feature type="strand" evidence="2">
    <location>
        <begin position="221"/>
        <end position="227"/>
    </location>
</feature>
<feature type="helix" evidence="2">
    <location>
        <begin position="230"/>
        <end position="236"/>
    </location>
</feature>
<feature type="helix" evidence="2">
    <location>
        <begin position="247"/>
        <end position="256"/>
    </location>
</feature>
<accession>Q2T1M2</accession>
<comment type="function">
    <text evidence="1">Catalyzes the phosphorylation of pantothenate (Pan), the first step in CoA biosynthesis.</text>
</comment>
<comment type="catalytic activity">
    <reaction evidence="1">
        <text>(R)-pantothenate + ATP = (R)-4'-phosphopantothenate + ADP + H(+)</text>
        <dbReference type="Rhea" id="RHEA:16373"/>
        <dbReference type="ChEBI" id="CHEBI:10986"/>
        <dbReference type="ChEBI" id="CHEBI:15378"/>
        <dbReference type="ChEBI" id="CHEBI:29032"/>
        <dbReference type="ChEBI" id="CHEBI:30616"/>
        <dbReference type="ChEBI" id="CHEBI:456216"/>
        <dbReference type="EC" id="2.7.1.33"/>
    </reaction>
</comment>
<comment type="cofactor">
    <cofactor evidence="1">
        <name>NH4(+)</name>
        <dbReference type="ChEBI" id="CHEBI:28938"/>
    </cofactor>
    <cofactor evidence="1">
        <name>K(+)</name>
        <dbReference type="ChEBI" id="CHEBI:29103"/>
    </cofactor>
    <text evidence="1">A monovalent cation. Ammonium or potassium.</text>
</comment>
<comment type="pathway">
    <text evidence="1">Cofactor biosynthesis; coenzyme A biosynthesis; CoA from (R)-pantothenate: step 1/5.</text>
</comment>
<comment type="subunit">
    <text evidence="1">Homodimer.</text>
</comment>
<comment type="subcellular location">
    <subcellularLocation>
        <location evidence="1">Cytoplasm</location>
    </subcellularLocation>
</comment>
<comment type="similarity">
    <text evidence="1">Belongs to the type III pantothenate kinase family.</text>
</comment>
<evidence type="ECO:0000255" key="1">
    <source>
        <dbReference type="HAMAP-Rule" id="MF_01274"/>
    </source>
</evidence>
<evidence type="ECO:0007829" key="2">
    <source>
        <dbReference type="PDB" id="4O5F"/>
    </source>
</evidence>
<evidence type="ECO:0007829" key="3">
    <source>
        <dbReference type="PDB" id="4O8K"/>
    </source>
</evidence>